<keyword id="KW-1185">Reference proteome</keyword>
<keyword id="KW-0687">Ribonucleoprotein</keyword>
<keyword id="KW-0689">Ribosomal protein</keyword>
<evidence type="ECO:0000255" key="1">
    <source>
        <dbReference type="HAMAP-Rule" id="MF_00391"/>
    </source>
</evidence>
<evidence type="ECO:0000305" key="2"/>
<gene>
    <name evidence="1" type="primary">rpmH</name>
    <name type="ordered locus">SDY_4185</name>
</gene>
<comment type="similarity">
    <text evidence="1">Belongs to the bacterial ribosomal protein bL34 family.</text>
</comment>
<reference key="1">
    <citation type="journal article" date="2005" name="Nucleic Acids Res.">
        <title>Genome dynamics and diversity of Shigella species, the etiologic agents of bacillary dysentery.</title>
        <authorList>
            <person name="Yang F."/>
            <person name="Yang J."/>
            <person name="Zhang X."/>
            <person name="Chen L."/>
            <person name="Jiang Y."/>
            <person name="Yan Y."/>
            <person name="Tang X."/>
            <person name="Wang J."/>
            <person name="Xiong Z."/>
            <person name="Dong J."/>
            <person name="Xue Y."/>
            <person name="Zhu Y."/>
            <person name="Xu X."/>
            <person name="Sun L."/>
            <person name="Chen S."/>
            <person name="Nie H."/>
            <person name="Peng J."/>
            <person name="Xu J."/>
            <person name="Wang Y."/>
            <person name="Yuan Z."/>
            <person name="Wen Y."/>
            <person name="Yao Z."/>
            <person name="Shen Y."/>
            <person name="Qiang B."/>
            <person name="Hou Y."/>
            <person name="Yu J."/>
            <person name="Jin Q."/>
        </authorList>
    </citation>
    <scope>NUCLEOTIDE SEQUENCE [LARGE SCALE GENOMIC DNA]</scope>
    <source>
        <strain>Sd197</strain>
    </source>
</reference>
<feature type="chain" id="PRO_1000013448" description="Large ribosomal subunit protein bL34">
    <location>
        <begin position="1"/>
        <end position="46"/>
    </location>
</feature>
<sequence length="46" mass="5380">MKRTFQPSVLKRNRSHGFRARMATKNGRQVLARRRAKGRARLTVSK</sequence>
<organism>
    <name type="scientific">Shigella dysenteriae serotype 1 (strain Sd197)</name>
    <dbReference type="NCBI Taxonomy" id="300267"/>
    <lineage>
        <taxon>Bacteria</taxon>
        <taxon>Pseudomonadati</taxon>
        <taxon>Pseudomonadota</taxon>
        <taxon>Gammaproteobacteria</taxon>
        <taxon>Enterobacterales</taxon>
        <taxon>Enterobacteriaceae</taxon>
        <taxon>Shigella</taxon>
    </lineage>
</organism>
<protein>
    <recommendedName>
        <fullName evidence="1">Large ribosomal subunit protein bL34</fullName>
    </recommendedName>
    <alternativeName>
        <fullName evidence="2">50S ribosomal protein L34</fullName>
    </alternativeName>
</protein>
<name>RL34_SHIDS</name>
<accession>Q329B5</accession>
<dbReference type="EMBL" id="CP000034">
    <property type="protein sequence ID" value="ABB64090.1"/>
    <property type="molecule type" value="Genomic_DNA"/>
</dbReference>
<dbReference type="RefSeq" id="WP_000831330.1">
    <property type="nucleotide sequence ID" value="NC_007606.1"/>
</dbReference>
<dbReference type="RefSeq" id="YP_405581.1">
    <property type="nucleotide sequence ID" value="NC_007606.1"/>
</dbReference>
<dbReference type="SMR" id="Q329B5"/>
<dbReference type="STRING" id="300267.SDY_4185"/>
<dbReference type="EnsemblBacteria" id="ABB64090">
    <property type="protein sequence ID" value="ABB64090"/>
    <property type="gene ID" value="SDY_4185"/>
</dbReference>
<dbReference type="GeneID" id="98190980"/>
<dbReference type="KEGG" id="sdy:SDY_4185"/>
<dbReference type="PATRIC" id="fig|300267.13.peg.4923"/>
<dbReference type="HOGENOM" id="CLU_129938_2_1_6"/>
<dbReference type="Proteomes" id="UP000002716">
    <property type="component" value="Chromosome"/>
</dbReference>
<dbReference type="GO" id="GO:1990904">
    <property type="term" value="C:ribonucleoprotein complex"/>
    <property type="evidence" value="ECO:0007669"/>
    <property type="project" value="UniProtKB-KW"/>
</dbReference>
<dbReference type="GO" id="GO:0005840">
    <property type="term" value="C:ribosome"/>
    <property type="evidence" value="ECO:0007669"/>
    <property type="project" value="UniProtKB-KW"/>
</dbReference>
<dbReference type="GO" id="GO:0003735">
    <property type="term" value="F:structural constituent of ribosome"/>
    <property type="evidence" value="ECO:0007669"/>
    <property type="project" value="InterPro"/>
</dbReference>
<dbReference type="GO" id="GO:0006412">
    <property type="term" value="P:translation"/>
    <property type="evidence" value="ECO:0007669"/>
    <property type="project" value="UniProtKB-UniRule"/>
</dbReference>
<dbReference type="FunFam" id="1.10.287.3980:FF:000001">
    <property type="entry name" value="Mitochondrial ribosomal protein L34"/>
    <property type="match status" value="1"/>
</dbReference>
<dbReference type="Gene3D" id="1.10.287.3980">
    <property type="match status" value="1"/>
</dbReference>
<dbReference type="HAMAP" id="MF_00391">
    <property type="entry name" value="Ribosomal_bL34"/>
    <property type="match status" value="1"/>
</dbReference>
<dbReference type="InterPro" id="IPR000271">
    <property type="entry name" value="Ribosomal_bL34"/>
</dbReference>
<dbReference type="InterPro" id="IPR020939">
    <property type="entry name" value="Ribosomal_bL34_CS"/>
</dbReference>
<dbReference type="NCBIfam" id="TIGR01030">
    <property type="entry name" value="rpmH_bact"/>
    <property type="match status" value="1"/>
</dbReference>
<dbReference type="PANTHER" id="PTHR14503:SF4">
    <property type="entry name" value="LARGE RIBOSOMAL SUBUNIT PROTEIN BL34M"/>
    <property type="match status" value="1"/>
</dbReference>
<dbReference type="PANTHER" id="PTHR14503">
    <property type="entry name" value="MITOCHONDRIAL RIBOSOMAL PROTEIN 34 FAMILY MEMBER"/>
    <property type="match status" value="1"/>
</dbReference>
<dbReference type="Pfam" id="PF00468">
    <property type="entry name" value="Ribosomal_L34"/>
    <property type="match status" value="1"/>
</dbReference>
<dbReference type="PROSITE" id="PS00784">
    <property type="entry name" value="RIBOSOMAL_L34"/>
    <property type="match status" value="1"/>
</dbReference>
<proteinExistence type="inferred from homology"/>